<evidence type="ECO:0000255" key="1">
    <source>
        <dbReference type="HAMAP-Rule" id="MF_00042"/>
    </source>
</evidence>
<evidence type="ECO:0000255" key="2">
    <source>
        <dbReference type="PROSITE-ProRule" id="PRU00408"/>
    </source>
</evidence>
<feature type="chain" id="PRO_1000074660" description="Ribonuclease H">
    <location>
        <begin position="1"/>
        <end position="152"/>
    </location>
</feature>
<feature type="domain" description="RNase H type-1" evidence="2">
    <location>
        <begin position="1"/>
        <end position="142"/>
    </location>
</feature>
<feature type="binding site" evidence="1">
    <location>
        <position position="10"/>
    </location>
    <ligand>
        <name>Mg(2+)</name>
        <dbReference type="ChEBI" id="CHEBI:18420"/>
        <label>1</label>
    </ligand>
</feature>
<feature type="binding site" evidence="1">
    <location>
        <position position="10"/>
    </location>
    <ligand>
        <name>Mg(2+)</name>
        <dbReference type="ChEBI" id="CHEBI:18420"/>
        <label>2</label>
    </ligand>
</feature>
<feature type="binding site" evidence="1">
    <location>
        <position position="48"/>
    </location>
    <ligand>
        <name>Mg(2+)</name>
        <dbReference type="ChEBI" id="CHEBI:18420"/>
        <label>1</label>
    </ligand>
</feature>
<feature type="binding site" evidence="1">
    <location>
        <position position="70"/>
    </location>
    <ligand>
        <name>Mg(2+)</name>
        <dbReference type="ChEBI" id="CHEBI:18420"/>
        <label>1</label>
    </ligand>
</feature>
<feature type="binding site" evidence="1">
    <location>
        <position position="134"/>
    </location>
    <ligand>
        <name>Mg(2+)</name>
        <dbReference type="ChEBI" id="CHEBI:18420"/>
        <label>2</label>
    </ligand>
</feature>
<dbReference type="EC" id="3.1.26.4" evidence="1"/>
<dbReference type="EMBL" id="CP000847">
    <property type="protein sequence ID" value="ABV75411.1"/>
    <property type="molecule type" value="Genomic_DNA"/>
</dbReference>
<dbReference type="RefSeq" id="WP_012150040.1">
    <property type="nucleotide sequence ID" value="NC_009881.1"/>
</dbReference>
<dbReference type="SMR" id="A8GPT6"/>
<dbReference type="STRING" id="293614.A1C_05880"/>
<dbReference type="KEGG" id="rak:A1C_05880"/>
<dbReference type="eggNOG" id="COG0328">
    <property type="taxonomic scope" value="Bacteria"/>
</dbReference>
<dbReference type="HOGENOM" id="CLU_030894_6_0_5"/>
<dbReference type="Proteomes" id="UP000006830">
    <property type="component" value="Chromosome"/>
</dbReference>
<dbReference type="GO" id="GO:0005737">
    <property type="term" value="C:cytoplasm"/>
    <property type="evidence" value="ECO:0007669"/>
    <property type="project" value="UniProtKB-SubCell"/>
</dbReference>
<dbReference type="GO" id="GO:0000287">
    <property type="term" value="F:magnesium ion binding"/>
    <property type="evidence" value="ECO:0007669"/>
    <property type="project" value="UniProtKB-UniRule"/>
</dbReference>
<dbReference type="GO" id="GO:0003676">
    <property type="term" value="F:nucleic acid binding"/>
    <property type="evidence" value="ECO:0007669"/>
    <property type="project" value="InterPro"/>
</dbReference>
<dbReference type="GO" id="GO:0004523">
    <property type="term" value="F:RNA-DNA hybrid ribonuclease activity"/>
    <property type="evidence" value="ECO:0007669"/>
    <property type="project" value="UniProtKB-UniRule"/>
</dbReference>
<dbReference type="GO" id="GO:0043137">
    <property type="term" value="P:DNA replication, removal of RNA primer"/>
    <property type="evidence" value="ECO:0007669"/>
    <property type="project" value="TreeGrafter"/>
</dbReference>
<dbReference type="CDD" id="cd09278">
    <property type="entry name" value="RNase_HI_prokaryote_like"/>
    <property type="match status" value="1"/>
</dbReference>
<dbReference type="FunFam" id="3.30.420.10:FF:000089">
    <property type="entry name" value="Ribonuclease H"/>
    <property type="match status" value="1"/>
</dbReference>
<dbReference type="Gene3D" id="3.30.420.10">
    <property type="entry name" value="Ribonuclease H-like superfamily/Ribonuclease H"/>
    <property type="match status" value="1"/>
</dbReference>
<dbReference type="HAMAP" id="MF_00042">
    <property type="entry name" value="RNase_H"/>
    <property type="match status" value="1"/>
</dbReference>
<dbReference type="InterPro" id="IPR050092">
    <property type="entry name" value="RNase_H"/>
</dbReference>
<dbReference type="InterPro" id="IPR012337">
    <property type="entry name" value="RNaseH-like_sf"/>
</dbReference>
<dbReference type="InterPro" id="IPR002156">
    <property type="entry name" value="RNaseH_domain"/>
</dbReference>
<dbReference type="InterPro" id="IPR036397">
    <property type="entry name" value="RNaseH_sf"/>
</dbReference>
<dbReference type="InterPro" id="IPR022892">
    <property type="entry name" value="RNaseHI"/>
</dbReference>
<dbReference type="NCBIfam" id="NF001236">
    <property type="entry name" value="PRK00203.1"/>
    <property type="match status" value="1"/>
</dbReference>
<dbReference type="PANTHER" id="PTHR10642">
    <property type="entry name" value="RIBONUCLEASE H1"/>
    <property type="match status" value="1"/>
</dbReference>
<dbReference type="PANTHER" id="PTHR10642:SF26">
    <property type="entry name" value="RIBONUCLEASE H1"/>
    <property type="match status" value="1"/>
</dbReference>
<dbReference type="Pfam" id="PF00075">
    <property type="entry name" value="RNase_H"/>
    <property type="match status" value="1"/>
</dbReference>
<dbReference type="SUPFAM" id="SSF53098">
    <property type="entry name" value="Ribonuclease H-like"/>
    <property type="match status" value="1"/>
</dbReference>
<dbReference type="PROSITE" id="PS50879">
    <property type="entry name" value="RNASE_H_1"/>
    <property type="match status" value="1"/>
</dbReference>
<proteinExistence type="inferred from homology"/>
<reference key="1">
    <citation type="submission" date="2007-09" db="EMBL/GenBank/DDBJ databases">
        <title>Complete genome sequence of Rickettsia akari.</title>
        <authorList>
            <person name="Madan A."/>
            <person name="Fahey J."/>
            <person name="Helton E."/>
            <person name="Ketteman M."/>
            <person name="Madan A."/>
            <person name="Rodrigues S."/>
            <person name="Sanchez A."/>
            <person name="Whiting M."/>
            <person name="Dasch G."/>
            <person name="Eremeeva M."/>
        </authorList>
    </citation>
    <scope>NUCLEOTIDE SEQUENCE [LARGE SCALE GENOMIC DNA]</scope>
    <source>
        <strain>Hartford</strain>
    </source>
</reference>
<sequence length="152" mass="17018">MNSKVVIYTDGACAGNPGPGGWGALLKFNDASKEIFGYELDTTNNRMEITAAFEALKILKKSCNVEIYTDSKYLQQGITAWIHNWIKNNWCKSNNEPVKNADLWQKLYAELSKHTIIWKWVKGHANNSGNIAADKLAVQGRETAIEVLKCRG</sequence>
<comment type="function">
    <text evidence="1">Endonuclease that specifically degrades the RNA of RNA-DNA hybrids.</text>
</comment>
<comment type="catalytic activity">
    <reaction evidence="1">
        <text>Endonucleolytic cleavage to 5'-phosphomonoester.</text>
        <dbReference type="EC" id="3.1.26.4"/>
    </reaction>
</comment>
<comment type="cofactor">
    <cofactor evidence="1">
        <name>Mg(2+)</name>
        <dbReference type="ChEBI" id="CHEBI:18420"/>
    </cofactor>
    <text evidence="1">Binds 1 Mg(2+) ion per subunit. May bind a second metal ion at a regulatory site, or after substrate binding.</text>
</comment>
<comment type="subunit">
    <text evidence="1">Monomer.</text>
</comment>
<comment type="subcellular location">
    <subcellularLocation>
        <location evidence="1">Cytoplasm</location>
    </subcellularLocation>
</comment>
<comment type="similarity">
    <text evidence="1">Belongs to the RNase H family.</text>
</comment>
<organism>
    <name type="scientific">Rickettsia akari (strain Hartford)</name>
    <dbReference type="NCBI Taxonomy" id="293614"/>
    <lineage>
        <taxon>Bacteria</taxon>
        <taxon>Pseudomonadati</taxon>
        <taxon>Pseudomonadota</taxon>
        <taxon>Alphaproteobacteria</taxon>
        <taxon>Rickettsiales</taxon>
        <taxon>Rickettsiaceae</taxon>
        <taxon>Rickettsieae</taxon>
        <taxon>Rickettsia</taxon>
        <taxon>spotted fever group</taxon>
    </lineage>
</organism>
<accession>A8GPT6</accession>
<protein>
    <recommendedName>
        <fullName evidence="1">Ribonuclease H</fullName>
        <shortName evidence="1">RNase H</shortName>
        <ecNumber evidence="1">3.1.26.4</ecNumber>
    </recommendedName>
</protein>
<keyword id="KW-0963">Cytoplasm</keyword>
<keyword id="KW-0255">Endonuclease</keyword>
<keyword id="KW-0378">Hydrolase</keyword>
<keyword id="KW-0460">Magnesium</keyword>
<keyword id="KW-0479">Metal-binding</keyword>
<keyword id="KW-0540">Nuclease</keyword>
<gene>
    <name evidence="1" type="primary">rnhA</name>
    <name type="ordered locus">A1C_05880</name>
</gene>
<name>RNH_RICAH</name>